<sequence>MADKPLTADQAEELHKYVIDGARAFVAIAAFAHVLAYSLTPWLH</sequence>
<feature type="initiator methionine" description="Removed" evidence="2">
    <location>
        <position position="1"/>
    </location>
</feature>
<feature type="chain" id="PRO_0000099816" description="Light-harvesting protein B-800/820 beta-1 chain">
    <location>
        <begin position="2"/>
        <end position="44"/>
    </location>
</feature>
<feature type="topological domain" description="Cytoplasmic" evidence="1">
    <location>
        <begin position="2"/>
        <end position="16"/>
    </location>
</feature>
<feature type="transmembrane region" description="Helical" evidence="1">
    <location>
        <begin position="17"/>
        <end position="39"/>
    </location>
</feature>
<feature type="topological domain" description="Periplasmic" evidence="1">
    <location>
        <begin position="40"/>
        <end position="44"/>
    </location>
</feature>
<feature type="binding site" description="axial binding residue" evidence="1">
    <location>
        <position position="15"/>
    </location>
    <ligand>
        <name>a bacteriochlorophyll</name>
        <dbReference type="ChEBI" id="CHEBI:38201"/>
    </ligand>
    <ligandPart>
        <name>Mg</name>
        <dbReference type="ChEBI" id="CHEBI:25107"/>
    </ligandPart>
</feature>
<feature type="binding site" description="axial binding residue" evidence="1">
    <location>
        <position position="33"/>
    </location>
    <ligand>
        <name>a bacteriochlorophyll</name>
        <dbReference type="ChEBI" id="CHEBI:38201"/>
    </ligand>
    <ligandPart>
        <name>Mg</name>
        <dbReference type="ChEBI" id="CHEBI:25107"/>
    </ligandPart>
</feature>
<name>LHB2_RHOAC</name>
<reference key="1">
    <citation type="journal article" date="1996" name="Photosyn. Res.">
        <title>The purple photosynthetic bacterium Rhodospeudomonas acidophila contains multiple puc peripheral antenna complex (LH2) genes: cloning and initial characterisation of four beta/alpha pairs.</title>
        <authorList>
            <person name="Gardiner A.T."/>
            <person name="Mackenzie C."/>
            <person name="Barrett S.J."/>
            <person name="Kaiser K."/>
            <person name="Cogdell R.J."/>
        </authorList>
    </citation>
    <scope>NUCLEOTIDE SEQUENCE [GENOMIC DNA]</scope>
    <source>
        <strain>DSM 141 / 7750 / LMG 4302</strain>
    </source>
</reference>
<reference key="2">
    <citation type="book" date="1987" name="Progress in photosynthesis research">
        <editorList>
            <person name="Biggins J."/>
        </editorList>
        <authorList>
            <person name="Brunisholz R.A."/>
            <person name="Bissig I."/>
            <person name="Niederer E."/>
            <person name="Suter F."/>
            <person name="Zuber H."/>
        </authorList>
    </citation>
    <scope>PROTEIN SEQUENCE OF 2-44</scope>
    <source>
        <strain>DSM 141 / 7750 / LMG 4302</strain>
    </source>
</reference>
<accession>P35095</accession>
<dbReference type="EMBL" id="Z47791">
    <property type="protein sequence ID" value="CAA87712.1"/>
    <property type="molecule type" value="Genomic_DNA"/>
</dbReference>
<dbReference type="PIR" id="S51233">
    <property type="entry name" value="S51233"/>
</dbReference>
<dbReference type="RefSeq" id="WP_155447025.1">
    <property type="nucleotide sequence ID" value="NZ_JAOQNR010000007.1"/>
</dbReference>
<dbReference type="SMR" id="P35095"/>
<dbReference type="GO" id="GO:0005886">
    <property type="term" value="C:plasma membrane"/>
    <property type="evidence" value="ECO:0007669"/>
    <property type="project" value="UniProtKB-SubCell"/>
</dbReference>
<dbReference type="GO" id="GO:0030077">
    <property type="term" value="C:plasma membrane light-harvesting complex"/>
    <property type="evidence" value="ECO:0007669"/>
    <property type="project" value="InterPro"/>
</dbReference>
<dbReference type="GO" id="GO:0042314">
    <property type="term" value="F:bacteriochlorophyll binding"/>
    <property type="evidence" value="ECO:0007669"/>
    <property type="project" value="UniProtKB-KW"/>
</dbReference>
<dbReference type="GO" id="GO:0045156">
    <property type="term" value="F:electron transporter, transferring electrons within the cyclic electron transport pathway of photosynthesis activity"/>
    <property type="evidence" value="ECO:0007669"/>
    <property type="project" value="InterPro"/>
</dbReference>
<dbReference type="GO" id="GO:0046872">
    <property type="term" value="F:metal ion binding"/>
    <property type="evidence" value="ECO:0007669"/>
    <property type="project" value="UniProtKB-KW"/>
</dbReference>
<dbReference type="GO" id="GO:0019684">
    <property type="term" value="P:photosynthesis, light reaction"/>
    <property type="evidence" value="ECO:0007669"/>
    <property type="project" value="InterPro"/>
</dbReference>
<dbReference type="Gene3D" id="1.20.5.250">
    <property type="match status" value="1"/>
</dbReference>
<dbReference type="InterPro" id="IPR000066">
    <property type="entry name" value="Antenna_a/b"/>
</dbReference>
<dbReference type="InterPro" id="IPR023623">
    <property type="entry name" value="Antenna_beta_CS"/>
</dbReference>
<dbReference type="InterPro" id="IPR023624">
    <property type="entry name" value="Antenna_beta_dom_sf"/>
</dbReference>
<dbReference type="InterPro" id="IPR002362">
    <property type="entry name" value="LHB-1/5"/>
</dbReference>
<dbReference type="InterPro" id="IPR035889">
    <property type="entry name" value="Light-harvesting_complex"/>
</dbReference>
<dbReference type="Pfam" id="PF00556">
    <property type="entry name" value="LHC"/>
    <property type="match status" value="1"/>
</dbReference>
<dbReference type="PIRSF" id="PIRSF002900">
    <property type="entry name" value="Antenna_beta"/>
    <property type="match status" value="1"/>
</dbReference>
<dbReference type="PRINTS" id="PR00674">
    <property type="entry name" value="LIGHTHARVSTB"/>
</dbReference>
<dbReference type="SUPFAM" id="SSF56918">
    <property type="entry name" value="Light-harvesting complex subunits"/>
    <property type="match status" value="1"/>
</dbReference>
<dbReference type="PROSITE" id="PS00969">
    <property type="entry name" value="ANTENNA_COMP_BETA"/>
    <property type="match status" value="1"/>
</dbReference>
<gene>
    <name type="primary">puc1B</name>
</gene>
<proteinExistence type="evidence at protein level"/>
<protein>
    <recommendedName>
        <fullName>Light-harvesting protein B-800/820 beta-1 chain</fullName>
    </recommendedName>
    <alternativeName>
        <fullName>Antenna pigment protein beta-1 chain</fullName>
    </alternativeName>
</protein>
<keyword id="KW-0042">Antenna complex</keyword>
<keyword id="KW-0076">Bacteriochlorophyll</keyword>
<keyword id="KW-0997">Cell inner membrane</keyword>
<keyword id="KW-1003">Cell membrane</keyword>
<keyword id="KW-0148">Chlorophyll</keyword>
<keyword id="KW-0157">Chromophore</keyword>
<keyword id="KW-0903">Direct protein sequencing</keyword>
<keyword id="KW-0437">Light-harvesting polypeptide</keyword>
<keyword id="KW-0460">Magnesium</keyword>
<keyword id="KW-0472">Membrane</keyword>
<keyword id="KW-0479">Metal-binding</keyword>
<keyword id="KW-0812">Transmembrane</keyword>
<keyword id="KW-1133">Transmembrane helix</keyword>
<evidence type="ECO:0000255" key="1"/>
<evidence type="ECO:0000269" key="2">
    <source ref="2"/>
</evidence>
<evidence type="ECO:0000305" key="3"/>
<organism>
    <name type="scientific">Rhodoblastus acidophilus</name>
    <name type="common">Rhodopseudomonas acidophila</name>
    <dbReference type="NCBI Taxonomy" id="1074"/>
    <lineage>
        <taxon>Bacteria</taxon>
        <taxon>Pseudomonadati</taxon>
        <taxon>Pseudomonadota</taxon>
        <taxon>Alphaproteobacteria</taxon>
        <taxon>Hyphomicrobiales</taxon>
        <taxon>Rhodoblastaceae</taxon>
        <taxon>Rhodoblastus</taxon>
    </lineage>
</organism>
<comment type="function">
    <text>Antenna complexes are light-harvesting systems, which transfer the excitation energy to the reaction centers.</text>
</comment>
<comment type="subunit">
    <text>The core complex is formed by different alpha and beta chains, binding bacteriochlorophyll molecules, and arranged most probably in tetrameric structures disposed around the reaction center. The non-pigmented gamma chains may constitute additional components.</text>
</comment>
<comment type="subcellular location">
    <subcellularLocation>
        <location>Cell inner membrane</location>
        <topology>Single-pass type II membrane protein</topology>
    </subcellularLocation>
</comment>
<comment type="similarity">
    <text evidence="3">Belongs to the antenna complex beta subunit family.</text>
</comment>